<name>CARB_BIFLD</name>
<reference key="1">
    <citation type="journal article" date="2008" name="BMC Genomics">
        <title>Comparative genomic analysis of the gut bacterium Bifidobacterium longum reveals loci susceptible to deletion during pure culture growth.</title>
        <authorList>
            <person name="Lee J.H."/>
            <person name="Karamychev V.N."/>
            <person name="Kozyavkin S.A."/>
            <person name="Mills D."/>
            <person name="Pavlov A.R."/>
            <person name="Pavlova N.V."/>
            <person name="Polouchine N.N."/>
            <person name="Richardson P.M."/>
            <person name="Shakhova V.V."/>
            <person name="Slesarev A.I."/>
            <person name="Weimer B."/>
            <person name="O'Sullivan D.J."/>
        </authorList>
    </citation>
    <scope>NUCLEOTIDE SEQUENCE [LARGE SCALE GENOMIC DNA]</scope>
    <source>
        <strain>DJO10A</strain>
    </source>
</reference>
<sequence length="1127" mass="123194">MPKRTDIKSVMVIGSGPIVIGQAAEFDYSGTQACRVLREEGIRVILVNSNPATIMTDPEMADATYIEPIATPILEQIIAKERPDALLPTLGGQTALNAAMALGEAGVLKKYNVELIGASLEAIDRGEDRELFKKVVDEAGAESARSDIAHSIEEVDKIAEKFGYPLVVRPSFTMGGLGSGIAHNEEELHRIAGAGIHYSPTDEVLIEEGIEGWKEFELELMRDRNDNVVVVCPIENVDPVGVHTGDSITVAPCFTLTDREYQKLRDIGIAIIRGVGVDTGGCNIQFAVHPDTGRIIVIEMNPRVSRSSALASKATGFPIAKIATKLALGYTLDEIRNDITQSTPASFEPTIDYVVTKVPRFAFEKFPGADPTLTTSMKSVGEAMALAGNFQESLGKAMRSIDKRHMGFNWDGEKPSAEEVAELLEAIHTPTEHRYLQLMRAIWGGATLEQVFAATKIDPWFLKQIFLINETAMTVREAETLTPRLLKKAKLAGLSDVQVAHLRGLGDEGENTIRELRWTYGLRPVYKTVDTCAAEFDAATPYYYSCYADETELRPREREAVIILGSGPNRIGQGIEFDYTCVHAVQELGKDYDTIMVNCNPETVSTDYDMSDRLYFEPLTFEDVLEIYEAEKKMGPVKGVIVQLGGQTPLSLAARLKAAGVPILGTTPESIDLAENRELFGEVLKKAEMNAPRYGTALSLEEAKEAAHRIGYPVLVRPSYVLGGRGMEIVYDDKQLNKYVDRALAEAKADTVVSGRLPSPLLIDKFLQDAIEIDVDALFDGEELYIGGIMEHVEEAGVHSGDAACTLPPSTLSDDQIRRLREGTYAIAKGCHVQGLINVQYAFMANTLYVIEANPRASRTVPFASKATGVALAKAAARIMAGETIADQRANGLLLPKGDGGDIHPGQQVAVKESVLPFKRFRTPVGKTVDILLGPEMRSTGEVMGFDRDFPHAFAKSQLAAYDGGLPTHGNVFISVNDTDKRQLPLIAVRLEELGFKLWATEGTASVLRRYGIESNIVDKISTRVDTDPEAPVEVHHAAGSVGKNVVQLIEEGKIDMILNTPNSRGSRSDGYSIRAAAIAADLPQFTTITEFQAALLAIEAVKHNDYQIMSIQEHSKQLFELERREF</sequence>
<feature type="chain" id="PRO_1000138885" description="Carbamoyl phosphate synthase large chain">
    <location>
        <begin position="1"/>
        <end position="1127"/>
    </location>
</feature>
<feature type="domain" description="ATP-grasp 1" evidence="1">
    <location>
        <begin position="133"/>
        <end position="328"/>
    </location>
</feature>
<feature type="domain" description="ATP-grasp 2" evidence="1">
    <location>
        <begin position="681"/>
        <end position="881"/>
    </location>
</feature>
<feature type="domain" description="MGS-like" evidence="1">
    <location>
        <begin position="964"/>
        <end position="1127"/>
    </location>
</feature>
<feature type="region of interest" description="Carboxyphosphate synthetic domain" evidence="1">
    <location>
        <begin position="1"/>
        <end position="402"/>
    </location>
</feature>
<feature type="region of interest" description="Oligomerization domain" evidence="1">
    <location>
        <begin position="403"/>
        <end position="551"/>
    </location>
</feature>
<feature type="region of interest" description="Carbamoyl phosphate synthetic domain" evidence="1">
    <location>
        <begin position="552"/>
        <end position="962"/>
    </location>
</feature>
<feature type="region of interest" description="Allosteric domain" evidence="1">
    <location>
        <begin position="963"/>
        <end position="1127"/>
    </location>
</feature>
<feature type="binding site" evidence="1">
    <location>
        <position position="129"/>
    </location>
    <ligand>
        <name>ATP</name>
        <dbReference type="ChEBI" id="CHEBI:30616"/>
        <label>1</label>
    </ligand>
</feature>
<feature type="binding site" evidence="1">
    <location>
        <position position="169"/>
    </location>
    <ligand>
        <name>ATP</name>
        <dbReference type="ChEBI" id="CHEBI:30616"/>
        <label>1</label>
    </ligand>
</feature>
<feature type="binding site" evidence="1">
    <location>
        <position position="175"/>
    </location>
    <ligand>
        <name>ATP</name>
        <dbReference type="ChEBI" id="CHEBI:30616"/>
        <label>1</label>
    </ligand>
</feature>
<feature type="binding site" evidence="1">
    <location>
        <position position="176"/>
    </location>
    <ligand>
        <name>ATP</name>
        <dbReference type="ChEBI" id="CHEBI:30616"/>
        <label>1</label>
    </ligand>
</feature>
<feature type="binding site" evidence="1">
    <location>
        <position position="208"/>
    </location>
    <ligand>
        <name>ATP</name>
        <dbReference type="ChEBI" id="CHEBI:30616"/>
        <label>1</label>
    </ligand>
</feature>
<feature type="binding site" evidence="1">
    <location>
        <position position="210"/>
    </location>
    <ligand>
        <name>ATP</name>
        <dbReference type="ChEBI" id="CHEBI:30616"/>
        <label>1</label>
    </ligand>
</feature>
<feature type="binding site" evidence="1">
    <location>
        <position position="215"/>
    </location>
    <ligand>
        <name>ATP</name>
        <dbReference type="ChEBI" id="CHEBI:30616"/>
        <label>1</label>
    </ligand>
</feature>
<feature type="binding site" evidence="1">
    <location>
        <position position="241"/>
    </location>
    <ligand>
        <name>ATP</name>
        <dbReference type="ChEBI" id="CHEBI:30616"/>
        <label>1</label>
    </ligand>
</feature>
<feature type="binding site" evidence="1">
    <location>
        <position position="242"/>
    </location>
    <ligand>
        <name>ATP</name>
        <dbReference type="ChEBI" id="CHEBI:30616"/>
        <label>1</label>
    </ligand>
</feature>
<feature type="binding site" evidence="1">
    <location>
        <position position="243"/>
    </location>
    <ligand>
        <name>ATP</name>
        <dbReference type="ChEBI" id="CHEBI:30616"/>
        <label>1</label>
    </ligand>
</feature>
<feature type="binding site" evidence="1">
    <location>
        <position position="285"/>
    </location>
    <ligand>
        <name>ATP</name>
        <dbReference type="ChEBI" id="CHEBI:30616"/>
        <label>1</label>
    </ligand>
</feature>
<feature type="binding site" evidence="1">
    <location>
        <position position="285"/>
    </location>
    <ligand>
        <name>Mg(2+)</name>
        <dbReference type="ChEBI" id="CHEBI:18420"/>
        <label>1</label>
    </ligand>
</feature>
<feature type="binding site" evidence="1">
    <location>
        <position position="285"/>
    </location>
    <ligand>
        <name>Mn(2+)</name>
        <dbReference type="ChEBI" id="CHEBI:29035"/>
        <label>1</label>
    </ligand>
</feature>
<feature type="binding site" evidence="1">
    <location>
        <position position="299"/>
    </location>
    <ligand>
        <name>ATP</name>
        <dbReference type="ChEBI" id="CHEBI:30616"/>
        <label>1</label>
    </ligand>
</feature>
<feature type="binding site" evidence="1">
    <location>
        <position position="299"/>
    </location>
    <ligand>
        <name>Mg(2+)</name>
        <dbReference type="ChEBI" id="CHEBI:18420"/>
        <label>1</label>
    </ligand>
</feature>
<feature type="binding site" evidence="1">
    <location>
        <position position="299"/>
    </location>
    <ligand>
        <name>Mg(2+)</name>
        <dbReference type="ChEBI" id="CHEBI:18420"/>
        <label>2</label>
    </ligand>
</feature>
<feature type="binding site" evidence="1">
    <location>
        <position position="299"/>
    </location>
    <ligand>
        <name>Mn(2+)</name>
        <dbReference type="ChEBI" id="CHEBI:29035"/>
        <label>1</label>
    </ligand>
</feature>
<feature type="binding site" evidence="1">
    <location>
        <position position="299"/>
    </location>
    <ligand>
        <name>Mn(2+)</name>
        <dbReference type="ChEBI" id="CHEBI:29035"/>
        <label>2</label>
    </ligand>
</feature>
<feature type="binding site" evidence="1">
    <location>
        <position position="301"/>
    </location>
    <ligand>
        <name>Mg(2+)</name>
        <dbReference type="ChEBI" id="CHEBI:18420"/>
        <label>2</label>
    </ligand>
</feature>
<feature type="binding site" evidence="1">
    <location>
        <position position="301"/>
    </location>
    <ligand>
        <name>Mn(2+)</name>
        <dbReference type="ChEBI" id="CHEBI:29035"/>
        <label>2</label>
    </ligand>
</feature>
<feature type="binding site" evidence="1">
    <location>
        <position position="717"/>
    </location>
    <ligand>
        <name>ATP</name>
        <dbReference type="ChEBI" id="CHEBI:30616"/>
        <label>2</label>
    </ligand>
</feature>
<feature type="binding site" evidence="1">
    <location>
        <position position="765"/>
    </location>
    <ligand>
        <name>ATP</name>
        <dbReference type="ChEBI" id="CHEBI:30616"/>
        <label>2</label>
    </ligand>
</feature>
<feature type="binding site" evidence="1">
    <location>
        <position position="767"/>
    </location>
    <ligand>
        <name>ATP</name>
        <dbReference type="ChEBI" id="CHEBI:30616"/>
        <label>2</label>
    </ligand>
</feature>
<feature type="binding site" evidence="1">
    <location>
        <position position="772"/>
    </location>
    <ligand>
        <name>ATP</name>
        <dbReference type="ChEBI" id="CHEBI:30616"/>
        <label>2</label>
    </ligand>
</feature>
<feature type="binding site" evidence="1">
    <location>
        <position position="797"/>
    </location>
    <ligand>
        <name>ATP</name>
        <dbReference type="ChEBI" id="CHEBI:30616"/>
        <label>2</label>
    </ligand>
</feature>
<feature type="binding site" evidence="1">
    <location>
        <position position="798"/>
    </location>
    <ligand>
        <name>ATP</name>
        <dbReference type="ChEBI" id="CHEBI:30616"/>
        <label>2</label>
    </ligand>
</feature>
<feature type="binding site" evidence="1">
    <location>
        <position position="799"/>
    </location>
    <ligand>
        <name>ATP</name>
        <dbReference type="ChEBI" id="CHEBI:30616"/>
        <label>2</label>
    </ligand>
</feature>
<feature type="binding site" evidence="1">
    <location>
        <position position="800"/>
    </location>
    <ligand>
        <name>ATP</name>
        <dbReference type="ChEBI" id="CHEBI:30616"/>
        <label>2</label>
    </ligand>
</feature>
<feature type="binding site" evidence="1">
    <location>
        <position position="840"/>
    </location>
    <ligand>
        <name>ATP</name>
        <dbReference type="ChEBI" id="CHEBI:30616"/>
        <label>2</label>
    </ligand>
</feature>
<feature type="binding site" evidence="1">
    <location>
        <position position="840"/>
    </location>
    <ligand>
        <name>Mg(2+)</name>
        <dbReference type="ChEBI" id="CHEBI:18420"/>
        <label>3</label>
    </ligand>
</feature>
<feature type="binding site" evidence="1">
    <location>
        <position position="840"/>
    </location>
    <ligand>
        <name>Mn(2+)</name>
        <dbReference type="ChEBI" id="CHEBI:29035"/>
        <label>3</label>
    </ligand>
</feature>
<feature type="binding site" evidence="1">
    <location>
        <position position="852"/>
    </location>
    <ligand>
        <name>ATP</name>
        <dbReference type="ChEBI" id="CHEBI:30616"/>
        <label>2</label>
    </ligand>
</feature>
<feature type="binding site" evidence="1">
    <location>
        <position position="852"/>
    </location>
    <ligand>
        <name>Mg(2+)</name>
        <dbReference type="ChEBI" id="CHEBI:18420"/>
        <label>3</label>
    </ligand>
</feature>
<feature type="binding site" evidence="1">
    <location>
        <position position="852"/>
    </location>
    <ligand>
        <name>Mg(2+)</name>
        <dbReference type="ChEBI" id="CHEBI:18420"/>
        <label>4</label>
    </ligand>
</feature>
<feature type="binding site" evidence="1">
    <location>
        <position position="852"/>
    </location>
    <ligand>
        <name>Mn(2+)</name>
        <dbReference type="ChEBI" id="CHEBI:29035"/>
        <label>3</label>
    </ligand>
</feature>
<feature type="binding site" evidence="1">
    <location>
        <position position="852"/>
    </location>
    <ligand>
        <name>Mn(2+)</name>
        <dbReference type="ChEBI" id="CHEBI:29035"/>
        <label>4</label>
    </ligand>
</feature>
<feature type="binding site" evidence="1">
    <location>
        <position position="854"/>
    </location>
    <ligand>
        <name>Mg(2+)</name>
        <dbReference type="ChEBI" id="CHEBI:18420"/>
        <label>4</label>
    </ligand>
</feature>
<feature type="binding site" evidence="1">
    <location>
        <position position="854"/>
    </location>
    <ligand>
        <name>Mn(2+)</name>
        <dbReference type="ChEBI" id="CHEBI:29035"/>
        <label>4</label>
    </ligand>
</feature>
<comment type="function">
    <text evidence="1">Large subunit of the glutamine-dependent carbamoyl phosphate synthetase (CPSase). CPSase catalyzes the formation of carbamoyl phosphate from the ammonia moiety of glutamine, carbonate, and phosphate donated by ATP, constituting the first step of 2 biosynthetic pathways, one leading to arginine and/or urea and the other to pyrimidine nucleotides. The large subunit (synthetase) binds the substrates ammonia (free or transferred from glutamine from the small subunit), hydrogencarbonate and ATP and carries out an ATP-coupled ligase reaction, activating hydrogencarbonate by forming carboxy phosphate which reacts with ammonia to form carbamoyl phosphate.</text>
</comment>
<comment type="catalytic activity">
    <reaction evidence="1">
        <text>hydrogencarbonate + L-glutamine + 2 ATP + H2O = carbamoyl phosphate + L-glutamate + 2 ADP + phosphate + 2 H(+)</text>
        <dbReference type="Rhea" id="RHEA:18633"/>
        <dbReference type="ChEBI" id="CHEBI:15377"/>
        <dbReference type="ChEBI" id="CHEBI:15378"/>
        <dbReference type="ChEBI" id="CHEBI:17544"/>
        <dbReference type="ChEBI" id="CHEBI:29985"/>
        <dbReference type="ChEBI" id="CHEBI:30616"/>
        <dbReference type="ChEBI" id="CHEBI:43474"/>
        <dbReference type="ChEBI" id="CHEBI:58228"/>
        <dbReference type="ChEBI" id="CHEBI:58359"/>
        <dbReference type="ChEBI" id="CHEBI:456216"/>
        <dbReference type="EC" id="6.3.5.5"/>
    </reaction>
</comment>
<comment type="catalytic activity">
    <molecule>Carbamoyl phosphate synthase large chain</molecule>
    <reaction evidence="1">
        <text>hydrogencarbonate + NH4(+) + 2 ATP = carbamoyl phosphate + 2 ADP + phosphate + 2 H(+)</text>
        <dbReference type="Rhea" id="RHEA:18029"/>
        <dbReference type="ChEBI" id="CHEBI:15378"/>
        <dbReference type="ChEBI" id="CHEBI:17544"/>
        <dbReference type="ChEBI" id="CHEBI:28938"/>
        <dbReference type="ChEBI" id="CHEBI:30616"/>
        <dbReference type="ChEBI" id="CHEBI:43474"/>
        <dbReference type="ChEBI" id="CHEBI:58228"/>
        <dbReference type="ChEBI" id="CHEBI:456216"/>
        <dbReference type="EC" id="6.3.4.16"/>
    </reaction>
</comment>
<comment type="cofactor">
    <cofactor evidence="1">
        <name>Mg(2+)</name>
        <dbReference type="ChEBI" id="CHEBI:18420"/>
    </cofactor>
    <cofactor evidence="1">
        <name>Mn(2+)</name>
        <dbReference type="ChEBI" id="CHEBI:29035"/>
    </cofactor>
    <text evidence="1">Binds 4 Mg(2+) or Mn(2+) ions per subunit.</text>
</comment>
<comment type="pathway">
    <text evidence="1">Amino-acid biosynthesis; L-arginine biosynthesis; carbamoyl phosphate from bicarbonate: step 1/1.</text>
</comment>
<comment type="pathway">
    <text evidence="1">Pyrimidine metabolism; UMP biosynthesis via de novo pathway; (S)-dihydroorotate from bicarbonate: step 1/3.</text>
</comment>
<comment type="subunit">
    <text evidence="1">Composed of two chains; the small (or glutamine) chain promotes the hydrolysis of glutamine to ammonia, which is used by the large (or ammonia) chain to synthesize carbamoyl phosphate. Tetramer of heterodimers (alpha,beta)4.</text>
</comment>
<comment type="domain">
    <text evidence="1">The large subunit is composed of 2 ATP-grasp domains that are involved in binding the 2 ATP molecules needed for carbamoyl phosphate synthesis. The N-terminal ATP-grasp domain (referred to as the carboxyphosphate synthetic component) catalyzes the ATP-dependent phosphorylation of hydrogencarbonate to carboxyphosphate and the subsequent nucleophilic attack by ammonia to form a carbamate intermediate. The C-terminal ATP-grasp domain (referred to as the carbamoyl phosphate synthetic component) then catalyzes the phosphorylation of carbamate with the second ATP to form the end product carbamoyl phosphate. The reactive and unstable enzyme intermediates are sequentially channeled from one active site to the next through the interior of the protein over a distance of at least 96 A.</text>
</comment>
<comment type="similarity">
    <text evidence="1">Belongs to the CarB family.</text>
</comment>
<evidence type="ECO:0000255" key="1">
    <source>
        <dbReference type="HAMAP-Rule" id="MF_01210"/>
    </source>
</evidence>
<proteinExistence type="inferred from homology"/>
<dbReference type="EC" id="6.3.4.16" evidence="1"/>
<dbReference type="EC" id="6.3.5.5" evidence="1"/>
<dbReference type="EMBL" id="CP000605">
    <property type="protein sequence ID" value="ACD97531.1"/>
    <property type="molecule type" value="Genomic_DNA"/>
</dbReference>
<dbReference type="RefSeq" id="WP_007056239.1">
    <property type="nucleotide sequence ID" value="NZ_AABM02000010.1"/>
</dbReference>
<dbReference type="SMR" id="B3DQ32"/>
<dbReference type="KEGG" id="blj:BLD_0085"/>
<dbReference type="HOGENOM" id="CLU_000513_1_0_11"/>
<dbReference type="UniPathway" id="UPA00068">
    <property type="reaction ID" value="UER00171"/>
</dbReference>
<dbReference type="UniPathway" id="UPA00070">
    <property type="reaction ID" value="UER00115"/>
</dbReference>
<dbReference type="Proteomes" id="UP000002419">
    <property type="component" value="Chromosome"/>
</dbReference>
<dbReference type="GO" id="GO:0005737">
    <property type="term" value="C:cytoplasm"/>
    <property type="evidence" value="ECO:0007669"/>
    <property type="project" value="TreeGrafter"/>
</dbReference>
<dbReference type="GO" id="GO:0005524">
    <property type="term" value="F:ATP binding"/>
    <property type="evidence" value="ECO:0007669"/>
    <property type="project" value="UniProtKB-UniRule"/>
</dbReference>
<dbReference type="GO" id="GO:0004087">
    <property type="term" value="F:carbamoyl-phosphate synthase (ammonia) activity"/>
    <property type="evidence" value="ECO:0007669"/>
    <property type="project" value="RHEA"/>
</dbReference>
<dbReference type="GO" id="GO:0004088">
    <property type="term" value="F:carbamoyl-phosphate synthase (glutamine-hydrolyzing) activity"/>
    <property type="evidence" value="ECO:0007669"/>
    <property type="project" value="UniProtKB-UniRule"/>
</dbReference>
<dbReference type="GO" id="GO:0046872">
    <property type="term" value="F:metal ion binding"/>
    <property type="evidence" value="ECO:0007669"/>
    <property type="project" value="UniProtKB-KW"/>
</dbReference>
<dbReference type="GO" id="GO:0044205">
    <property type="term" value="P:'de novo' UMP biosynthetic process"/>
    <property type="evidence" value="ECO:0007669"/>
    <property type="project" value="UniProtKB-UniRule"/>
</dbReference>
<dbReference type="GO" id="GO:0006541">
    <property type="term" value="P:glutamine metabolic process"/>
    <property type="evidence" value="ECO:0007669"/>
    <property type="project" value="TreeGrafter"/>
</dbReference>
<dbReference type="GO" id="GO:0006526">
    <property type="term" value="P:L-arginine biosynthetic process"/>
    <property type="evidence" value="ECO:0007669"/>
    <property type="project" value="UniProtKB-UniRule"/>
</dbReference>
<dbReference type="CDD" id="cd01424">
    <property type="entry name" value="MGS_CPS_II"/>
    <property type="match status" value="1"/>
</dbReference>
<dbReference type="FunFam" id="1.10.1030.10:FF:000002">
    <property type="entry name" value="Carbamoyl-phosphate synthase large chain"/>
    <property type="match status" value="1"/>
</dbReference>
<dbReference type="FunFam" id="3.30.470.20:FF:000007">
    <property type="entry name" value="Carbamoyl-phosphate synthase large chain"/>
    <property type="match status" value="1"/>
</dbReference>
<dbReference type="FunFam" id="3.30.470.20:FF:000014">
    <property type="entry name" value="Carbamoyl-phosphate synthase large chain"/>
    <property type="match status" value="1"/>
</dbReference>
<dbReference type="FunFam" id="3.40.50.20:FF:000001">
    <property type="entry name" value="Carbamoyl-phosphate synthase large chain"/>
    <property type="match status" value="1"/>
</dbReference>
<dbReference type="FunFam" id="3.40.50.20:FF:000002">
    <property type="entry name" value="Carbamoyl-phosphate synthase large chain"/>
    <property type="match status" value="1"/>
</dbReference>
<dbReference type="Gene3D" id="3.40.50.20">
    <property type="match status" value="2"/>
</dbReference>
<dbReference type="Gene3D" id="3.30.1490.20">
    <property type="entry name" value="ATP-grasp fold, A domain"/>
    <property type="match status" value="1"/>
</dbReference>
<dbReference type="Gene3D" id="3.30.470.20">
    <property type="entry name" value="ATP-grasp fold, B domain"/>
    <property type="match status" value="2"/>
</dbReference>
<dbReference type="Gene3D" id="1.10.1030.10">
    <property type="entry name" value="Carbamoyl-phosphate synthetase, large subunit oligomerisation domain"/>
    <property type="match status" value="1"/>
</dbReference>
<dbReference type="Gene3D" id="3.40.50.1380">
    <property type="entry name" value="Methylglyoxal synthase-like domain"/>
    <property type="match status" value="1"/>
</dbReference>
<dbReference type="HAMAP" id="MF_01210_B">
    <property type="entry name" value="CPSase_L_chain_B"/>
    <property type="match status" value="1"/>
</dbReference>
<dbReference type="InterPro" id="IPR011761">
    <property type="entry name" value="ATP-grasp"/>
</dbReference>
<dbReference type="InterPro" id="IPR013815">
    <property type="entry name" value="ATP_grasp_subdomain_1"/>
</dbReference>
<dbReference type="InterPro" id="IPR006275">
    <property type="entry name" value="CarbamoylP_synth_lsu"/>
</dbReference>
<dbReference type="InterPro" id="IPR005480">
    <property type="entry name" value="CarbamoylP_synth_lsu_oligo"/>
</dbReference>
<dbReference type="InterPro" id="IPR036897">
    <property type="entry name" value="CarbamoylP_synth_lsu_oligo_sf"/>
</dbReference>
<dbReference type="InterPro" id="IPR005479">
    <property type="entry name" value="CbamoylP_synth_lsu-like_ATP-bd"/>
</dbReference>
<dbReference type="InterPro" id="IPR005483">
    <property type="entry name" value="CbamoylP_synth_lsu_CPSase_dom"/>
</dbReference>
<dbReference type="InterPro" id="IPR011607">
    <property type="entry name" value="MGS-like_dom"/>
</dbReference>
<dbReference type="InterPro" id="IPR036914">
    <property type="entry name" value="MGS-like_dom_sf"/>
</dbReference>
<dbReference type="InterPro" id="IPR033937">
    <property type="entry name" value="MGS_CPS_CarB"/>
</dbReference>
<dbReference type="InterPro" id="IPR016185">
    <property type="entry name" value="PreATP-grasp_dom_sf"/>
</dbReference>
<dbReference type="NCBIfam" id="TIGR01369">
    <property type="entry name" value="CPSaseII_lrg"/>
    <property type="match status" value="1"/>
</dbReference>
<dbReference type="NCBIfam" id="NF003671">
    <property type="entry name" value="PRK05294.1"/>
    <property type="match status" value="1"/>
</dbReference>
<dbReference type="NCBIfam" id="NF009455">
    <property type="entry name" value="PRK12815.1"/>
    <property type="match status" value="1"/>
</dbReference>
<dbReference type="PANTHER" id="PTHR11405:SF53">
    <property type="entry name" value="CARBAMOYL-PHOSPHATE SYNTHASE [AMMONIA], MITOCHONDRIAL"/>
    <property type="match status" value="1"/>
</dbReference>
<dbReference type="PANTHER" id="PTHR11405">
    <property type="entry name" value="CARBAMOYLTRANSFERASE FAMILY MEMBER"/>
    <property type="match status" value="1"/>
</dbReference>
<dbReference type="Pfam" id="PF02786">
    <property type="entry name" value="CPSase_L_D2"/>
    <property type="match status" value="2"/>
</dbReference>
<dbReference type="Pfam" id="PF02787">
    <property type="entry name" value="CPSase_L_D3"/>
    <property type="match status" value="1"/>
</dbReference>
<dbReference type="Pfam" id="PF02142">
    <property type="entry name" value="MGS"/>
    <property type="match status" value="1"/>
</dbReference>
<dbReference type="PRINTS" id="PR00098">
    <property type="entry name" value="CPSASE"/>
</dbReference>
<dbReference type="SMART" id="SM01096">
    <property type="entry name" value="CPSase_L_D3"/>
    <property type="match status" value="1"/>
</dbReference>
<dbReference type="SMART" id="SM00851">
    <property type="entry name" value="MGS"/>
    <property type="match status" value="1"/>
</dbReference>
<dbReference type="SUPFAM" id="SSF48108">
    <property type="entry name" value="Carbamoyl phosphate synthetase, large subunit connection domain"/>
    <property type="match status" value="1"/>
</dbReference>
<dbReference type="SUPFAM" id="SSF56059">
    <property type="entry name" value="Glutathione synthetase ATP-binding domain-like"/>
    <property type="match status" value="2"/>
</dbReference>
<dbReference type="SUPFAM" id="SSF52335">
    <property type="entry name" value="Methylglyoxal synthase-like"/>
    <property type="match status" value="1"/>
</dbReference>
<dbReference type="SUPFAM" id="SSF52440">
    <property type="entry name" value="PreATP-grasp domain"/>
    <property type="match status" value="2"/>
</dbReference>
<dbReference type="PROSITE" id="PS50975">
    <property type="entry name" value="ATP_GRASP"/>
    <property type="match status" value="2"/>
</dbReference>
<dbReference type="PROSITE" id="PS00866">
    <property type="entry name" value="CPSASE_1"/>
    <property type="match status" value="2"/>
</dbReference>
<dbReference type="PROSITE" id="PS00867">
    <property type="entry name" value="CPSASE_2"/>
    <property type="match status" value="2"/>
</dbReference>
<dbReference type="PROSITE" id="PS51855">
    <property type="entry name" value="MGS"/>
    <property type="match status" value="1"/>
</dbReference>
<protein>
    <recommendedName>
        <fullName evidence="1">Carbamoyl phosphate synthase large chain</fullName>
        <ecNumber evidence="1">6.3.4.16</ecNumber>
        <ecNumber evidence="1">6.3.5.5</ecNumber>
    </recommendedName>
    <alternativeName>
        <fullName evidence="1">Carbamoyl phosphate synthetase ammonia chain</fullName>
    </alternativeName>
</protein>
<organism>
    <name type="scientific">Bifidobacterium longum (strain DJO10A)</name>
    <dbReference type="NCBI Taxonomy" id="205913"/>
    <lineage>
        <taxon>Bacteria</taxon>
        <taxon>Bacillati</taxon>
        <taxon>Actinomycetota</taxon>
        <taxon>Actinomycetes</taxon>
        <taxon>Bifidobacteriales</taxon>
        <taxon>Bifidobacteriaceae</taxon>
        <taxon>Bifidobacterium</taxon>
    </lineage>
</organism>
<accession>B3DQ32</accession>
<gene>
    <name evidence="1" type="primary">carB</name>
    <name type="ordered locus">BLD_0085</name>
</gene>
<keyword id="KW-0028">Amino-acid biosynthesis</keyword>
<keyword id="KW-0055">Arginine biosynthesis</keyword>
<keyword id="KW-0067">ATP-binding</keyword>
<keyword id="KW-0436">Ligase</keyword>
<keyword id="KW-0460">Magnesium</keyword>
<keyword id="KW-0464">Manganese</keyword>
<keyword id="KW-0479">Metal-binding</keyword>
<keyword id="KW-0547">Nucleotide-binding</keyword>
<keyword id="KW-0665">Pyrimidine biosynthesis</keyword>
<keyword id="KW-0677">Repeat</keyword>